<keyword id="KW-0051">Antiviral defense</keyword>
<keyword id="KW-0963">Cytoplasm</keyword>
<keyword id="KW-0378">Hydrolase</keyword>
<keyword id="KW-0391">Immunity</keyword>
<keyword id="KW-0399">Innate immunity</keyword>
<keyword id="KW-0479">Metal-binding</keyword>
<keyword id="KW-0539">Nucleus</keyword>
<keyword id="KW-0597">Phosphoprotein</keyword>
<keyword id="KW-1185">Reference proteome</keyword>
<keyword id="KW-0677">Repeat</keyword>
<keyword id="KW-0862">Zinc</keyword>
<protein>
    <recommendedName>
        <fullName evidence="1">DNA dC-&gt;dU-editing enzyme APOBEC-3G</fullName>
        <ecNumber evidence="1">3.5.4.38</ecNumber>
    </recommendedName>
    <alternativeName>
        <fullName>Deoxycytidine deaminase</fullName>
    </alternativeName>
</protein>
<gene>
    <name type="primary">APOBEC3G</name>
</gene>
<evidence type="ECO:0000250" key="1">
    <source>
        <dbReference type="UniProtKB" id="Q9HC16"/>
    </source>
</evidence>
<evidence type="ECO:0000255" key="2">
    <source>
        <dbReference type="PROSITE-ProRule" id="PRU01083"/>
    </source>
</evidence>
<evidence type="ECO:0000269" key="3">
    <source>
    </source>
</evidence>
<evidence type="ECO:0000269" key="4">
    <source>
    </source>
</evidence>
<evidence type="ECO:0000303" key="5">
    <source>
    </source>
</evidence>
<evidence type="ECO:0000305" key="6"/>
<name>ABC3G_PANTR</name>
<comment type="function">
    <text evidence="3 4 5">DNA deaminase (cytidine deaminase) which acts as an inhibitor of retrovirus replication and retrotransposon mobility via deaminase-dependent and -independent mechanisms. Exhibits antiviral activity against vif-deficient: HIV-1 and simian immunodeficiency viruses (SIVs) and also against simian foamy virus (SFV). After the penetration of retroviral nucleocapsids into target cells of infection and the initiation of reverse transcription, it can induce the conversion of cytosine to uracil in the minus-sense single-strand viral DNA, leading to G-to-A hypermutations in the subsequent plus-strand viral DNA. The resultant detrimental levels of mutations in the proviral genome, along with a deamination-independent mechanism that works prior to the proviral integration, together exert efficient antiretroviral effects in infected target cells. Selectively targets single-stranded DNA and does not deaminate double-stranded DNA or single- or double-stranded RNA. May inhibit the mobility of LTR retrotransposons.</text>
</comment>
<comment type="catalytic activity">
    <reaction evidence="1">
        <text>a 2'-deoxycytidine in single-stranded DNA + H2O + H(+) = a 2'-deoxyuridine in single-stranded DNA + NH4(+)</text>
        <dbReference type="Rhea" id="RHEA:50948"/>
        <dbReference type="Rhea" id="RHEA-COMP:12846"/>
        <dbReference type="Rhea" id="RHEA-COMP:12847"/>
        <dbReference type="ChEBI" id="CHEBI:15377"/>
        <dbReference type="ChEBI" id="CHEBI:15378"/>
        <dbReference type="ChEBI" id="CHEBI:28938"/>
        <dbReference type="ChEBI" id="CHEBI:85452"/>
        <dbReference type="ChEBI" id="CHEBI:133902"/>
        <dbReference type="EC" id="3.5.4.38"/>
    </reaction>
</comment>
<comment type="cofactor">
    <cofactor evidence="1">
        <name>Zn(2+)</name>
        <dbReference type="ChEBI" id="CHEBI:29105"/>
    </cofactor>
</comment>
<comment type="subunit">
    <text evidence="1">Homodimer. Homooligomer. Can bind RNA to form ribonucleoprotein complexes of high-molecular-mass (HMM) or low-molecular-mass (LMM). HMM is inactive and heterogeneous in protein composition because of binding nonselectively to cellular RNAs, which in turn are associated with variety of cellular proteins. The LMM form which is enzymatically active has few or no RNAs associated. Its ability to form homooligomer is distinct from its ability to assemble into HMM. Interacts with APOBEC3B, APOBEC3F, MOV10, AGO2, EIF4E, EIF4ENIF1, DCP2 and DDX6 in an RNA-dependent manner. Interacts with AGO1, AGO3 and PKA/PRKACA (By similarity).</text>
</comment>
<comment type="subcellular location">
    <subcellularLocation>
        <location evidence="1">Cytoplasm</location>
    </subcellularLocation>
    <subcellularLocation>
        <location evidence="1">Nucleus</location>
    </subcellularLocation>
    <subcellularLocation>
        <location evidence="1">Cytoplasm</location>
        <location evidence="1">P-body</location>
    </subcellularLocation>
    <text evidence="1">Mainly cytoplasmic, small amount are found in the nucleus.</text>
</comment>
<comment type="domain">
    <text evidence="1">The CMP/dCMP deaminase domain 1 mediates RNA binding, RNA-dependent oligomerization and virion incorporation whereas the CMP/dCMP deaminase domain 2 confers deoxycytidine deaminase activity and substrate sequence specificity.</text>
</comment>
<comment type="miscellaneous">
    <text>Accumulation of APOBEC3G induced non-lethal hypermutation could contribute to the genetic variation of primate lentiviral populations.</text>
</comment>
<comment type="similarity">
    <text evidence="6">Belongs to the cytidine and deoxycytidylate deaminase family.</text>
</comment>
<reference key="1">
    <citation type="journal article" date="2004" name="PLoS Biol.">
        <title>Ancient adaptive evolution of the primate antiviral DNA-editing enzyme APOBEC3G.</title>
        <authorList>
            <person name="Sawyer S.L."/>
            <person name="Emerman M."/>
            <person name="Malik H.S."/>
        </authorList>
    </citation>
    <scope>NUCLEOTIDE SEQUENCE [GENOMIC DNA]</scope>
</reference>
<reference key="2">
    <citation type="journal article" date="2003" name="Cell">
        <title>Species-specific exclusion of APOBEC3G from HIV-1 virions by Vif.</title>
        <authorList>
            <person name="Mariani R."/>
            <person name="Chen D."/>
            <person name="Schroefelbauer B."/>
            <person name="Navarro F."/>
            <person name="Koenig R."/>
            <person name="Bollman B."/>
            <person name="Muenk C."/>
            <person name="Nymark-McMahon H."/>
            <person name="Landau N.R."/>
        </authorList>
    </citation>
    <scope>NUCLEOTIDE SEQUENCE [MRNA] OF 1-378</scope>
    <scope>FUNCTION IN DNA C TO U EDITING</scope>
    <scope>SPECIES-SPECIFIC RESTRICTION TO HIV-1 INFECTION</scope>
</reference>
<reference key="3">
    <citation type="journal article" date="2006" name="J. Virol.">
        <title>Restriction of foamy viruses by APOBEC cytidine deaminases.</title>
        <authorList>
            <person name="Delebecque F."/>
            <person name="Suspene R."/>
            <person name="Calattini S."/>
            <person name="Casartelli N."/>
            <person name="Saib A."/>
            <person name="Froment A."/>
            <person name="Wain-Hobson S."/>
            <person name="Gessain A."/>
            <person name="Vartanian J.P."/>
            <person name="Schwartz O."/>
        </authorList>
    </citation>
    <scope>FUNCTION IN SFV RESTRICTION</scope>
</reference>
<reference key="4">
    <citation type="journal article" date="2008" name="Annu. Rev. Immunol.">
        <title>The APOBEC3 cytidine deaminases: an innate defensive network opposing exogenous retroviruses and endogenous retroelements.</title>
        <authorList>
            <person name="Chiu Y.L."/>
            <person name="Greene W.C."/>
        </authorList>
    </citation>
    <scope>REVIEW</scope>
</reference>
<sequence length="384" mass="46089">MKPHFRNPVERMYQDTFSDNFYNRPILSHRNTVWLCYEVKTKGPSRPPLDAKIFRGQVYSKLKYHPEMRFFHWFSKWRKLHRDQEYEVTWYISWSPCTKCTRDVATFLAEDPKVTLTIFVARLYYFWDPDYQEALRSLCQKRDGPRATMKIMNYDEFQHCWSKFVYSQRELFEPWNNLPKYYILLHIMLGEILRHSMDPPTFTSNFNNELWVRGRHETYLCYEVERLHNDTWVLLNQRRGFLCNQAPHKHGFLEGRHAELCFLDVIPFWKLDLHQDYRVTCFTSWSPCFSCAQEMAKFISNNKHVSLCIFAARIYDDQGRCQEGLRTLAKAGAKISIMTYSEFKHCWDTFVDHQGCPFQPWDGLEEHSQALSGRLRAILQNQGN</sequence>
<proteinExistence type="evidence at protein level"/>
<accession>Q7YR24</accession>
<accession>Q694C3</accession>
<dbReference type="EC" id="3.5.4.38" evidence="1"/>
<dbReference type="EMBL" id="AY622537">
    <property type="protein sequence ID" value="AAT44392.1"/>
    <property type="molecule type" value="Genomic_DNA"/>
</dbReference>
<dbReference type="EMBL" id="AY622530">
    <property type="protein sequence ID" value="AAT44392.1"/>
    <property type="status" value="JOINED"/>
    <property type="molecule type" value="Genomic_DNA"/>
</dbReference>
<dbReference type="EMBL" id="AY622531">
    <property type="protein sequence ID" value="AAT44392.1"/>
    <property type="status" value="JOINED"/>
    <property type="molecule type" value="Genomic_DNA"/>
</dbReference>
<dbReference type="EMBL" id="AY622532">
    <property type="protein sequence ID" value="AAT44392.1"/>
    <property type="status" value="JOINED"/>
    <property type="molecule type" value="Genomic_DNA"/>
</dbReference>
<dbReference type="EMBL" id="AY622533">
    <property type="protein sequence ID" value="AAT44392.1"/>
    <property type="status" value="JOINED"/>
    <property type="molecule type" value="Genomic_DNA"/>
</dbReference>
<dbReference type="EMBL" id="AY622534">
    <property type="protein sequence ID" value="AAT44392.1"/>
    <property type="status" value="JOINED"/>
    <property type="molecule type" value="Genomic_DNA"/>
</dbReference>
<dbReference type="EMBL" id="AY622535">
    <property type="protein sequence ID" value="AAT44392.1"/>
    <property type="status" value="JOINED"/>
    <property type="molecule type" value="Genomic_DNA"/>
</dbReference>
<dbReference type="EMBL" id="AY622536">
    <property type="protein sequence ID" value="AAT44392.1"/>
    <property type="status" value="JOINED"/>
    <property type="molecule type" value="Genomic_DNA"/>
</dbReference>
<dbReference type="EMBL" id="AY331715">
    <property type="protein sequence ID" value="AAP85255.1"/>
    <property type="molecule type" value="mRNA"/>
</dbReference>
<dbReference type="SMR" id="Q7YR24"/>
<dbReference type="FunCoup" id="Q7YR24">
    <property type="interactions" value="69"/>
</dbReference>
<dbReference type="STRING" id="9598.ENSPTRP00000024786"/>
<dbReference type="PaxDb" id="9598-ENSPTRP00000024786"/>
<dbReference type="eggNOG" id="KOG4075">
    <property type="taxonomic scope" value="Eukaryota"/>
</dbReference>
<dbReference type="InParanoid" id="Q7YR24"/>
<dbReference type="Proteomes" id="UP000002277">
    <property type="component" value="Unplaced"/>
</dbReference>
<dbReference type="GO" id="GO:0005737">
    <property type="term" value="C:cytoplasm"/>
    <property type="evidence" value="ECO:0000250"/>
    <property type="project" value="UniProtKB"/>
</dbReference>
<dbReference type="GO" id="GO:0005634">
    <property type="term" value="C:nucleus"/>
    <property type="evidence" value="ECO:0000318"/>
    <property type="project" value="GO_Central"/>
</dbReference>
<dbReference type="GO" id="GO:0000932">
    <property type="term" value="C:P-body"/>
    <property type="evidence" value="ECO:0000250"/>
    <property type="project" value="UniProtKB"/>
</dbReference>
<dbReference type="GO" id="GO:1990904">
    <property type="term" value="C:ribonucleoprotein complex"/>
    <property type="evidence" value="ECO:0000250"/>
    <property type="project" value="UniProtKB"/>
</dbReference>
<dbReference type="GO" id="GO:0004126">
    <property type="term" value="F:cytidine deaminase activity"/>
    <property type="evidence" value="ECO:0000250"/>
    <property type="project" value="UniProtKB"/>
</dbReference>
<dbReference type="GO" id="GO:0003723">
    <property type="term" value="F:RNA binding"/>
    <property type="evidence" value="ECO:0000318"/>
    <property type="project" value="GO_Central"/>
</dbReference>
<dbReference type="GO" id="GO:0008270">
    <property type="term" value="F:zinc ion binding"/>
    <property type="evidence" value="ECO:0007669"/>
    <property type="project" value="InterPro"/>
</dbReference>
<dbReference type="GO" id="GO:0009972">
    <property type="term" value="P:cytidine deamination"/>
    <property type="evidence" value="ECO:0000250"/>
    <property type="project" value="UniProtKB"/>
</dbReference>
<dbReference type="GO" id="GO:0016554">
    <property type="term" value="P:cytidine to uridine editing"/>
    <property type="evidence" value="ECO:0000318"/>
    <property type="project" value="GO_Central"/>
</dbReference>
<dbReference type="GO" id="GO:0051607">
    <property type="term" value="P:defense response to virus"/>
    <property type="evidence" value="ECO:0000250"/>
    <property type="project" value="UniProtKB"/>
</dbReference>
<dbReference type="GO" id="GO:0070383">
    <property type="term" value="P:DNA cytosine deamination"/>
    <property type="evidence" value="ECO:0000318"/>
    <property type="project" value="GO_Central"/>
</dbReference>
<dbReference type="GO" id="GO:0045087">
    <property type="term" value="P:innate immune response"/>
    <property type="evidence" value="ECO:0007669"/>
    <property type="project" value="UniProtKB-KW"/>
</dbReference>
<dbReference type="GO" id="GO:0045869">
    <property type="term" value="P:negative regulation of single stranded viral RNA replication via double stranded DNA intermediate"/>
    <property type="evidence" value="ECO:0000318"/>
    <property type="project" value="GO_Central"/>
</dbReference>
<dbReference type="GO" id="GO:0045071">
    <property type="term" value="P:negative regulation of viral genome replication"/>
    <property type="evidence" value="ECO:0000314"/>
    <property type="project" value="UniProtKB"/>
</dbReference>
<dbReference type="GO" id="GO:0010526">
    <property type="term" value="P:transposable element silencing"/>
    <property type="evidence" value="ECO:0000250"/>
    <property type="project" value="UniProtKB"/>
</dbReference>
<dbReference type="CDD" id="cd01283">
    <property type="entry name" value="cytidine_deaminase"/>
    <property type="match status" value="2"/>
</dbReference>
<dbReference type="FunFam" id="3.40.140.10:FF:000029">
    <property type="entry name" value="DNA dC-&gt;dU-editing enzyme APOBEC-3G"/>
    <property type="match status" value="2"/>
</dbReference>
<dbReference type="Gene3D" id="3.40.140.10">
    <property type="entry name" value="Cytidine Deaminase, domain 2"/>
    <property type="match status" value="2"/>
</dbReference>
<dbReference type="InterPro" id="IPR016192">
    <property type="entry name" value="APOBEC/CMP_deaminase_Zn-bd"/>
</dbReference>
<dbReference type="InterPro" id="IPR050610">
    <property type="entry name" value="APOBEC_Cyt_Deaminase"/>
</dbReference>
<dbReference type="InterPro" id="IPR002125">
    <property type="entry name" value="CMP_dCMP_dom"/>
</dbReference>
<dbReference type="InterPro" id="IPR016193">
    <property type="entry name" value="Cytidine_deaminase-like"/>
</dbReference>
<dbReference type="PANTHER" id="PTHR13857:SF20">
    <property type="entry name" value="DNA DC-DU-EDITING ENZYME APOBEC-3G"/>
    <property type="match status" value="1"/>
</dbReference>
<dbReference type="PANTHER" id="PTHR13857">
    <property type="entry name" value="MRNA EDITING ENZYME"/>
    <property type="match status" value="1"/>
</dbReference>
<dbReference type="Pfam" id="PF18782">
    <property type="entry name" value="NAD2"/>
    <property type="match status" value="2"/>
</dbReference>
<dbReference type="SUPFAM" id="SSF53927">
    <property type="entry name" value="Cytidine deaminase-like"/>
    <property type="match status" value="1"/>
</dbReference>
<dbReference type="PROSITE" id="PS00903">
    <property type="entry name" value="CYT_DCMP_DEAMINASES_1"/>
    <property type="match status" value="1"/>
</dbReference>
<dbReference type="PROSITE" id="PS51747">
    <property type="entry name" value="CYT_DCMP_DEAMINASES_2"/>
    <property type="match status" value="2"/>
</dbReference>
<feature type="chain" id="PRO_0000171767" description="DNA dC-&gt;dU-editing enzyme APOBEC-3G">
    <location>
        <begin position="1"/>
        <end position="384"/>
    </location>
</feature>
<feature type="domain" description="CMP/dCMP-type deaminase 1" evidence="2">
    <location>
        <begin position="29"/>
        <end position="138"/>
    </location>
</feature>
<feature type="domain" description="CMP/dCMP-type deaminase 2" evidence="2">
    <location>
        <begin position="214"/>
        <end position="328"/>
    </location>
</feature>
<feature type="region of interest" description="Essential for cytoplasmic localization" evidence="6">
    <location>
        <begin position="1"/>
        <end position="60"/>
    </location>
</feature>
<feature type="region of interest" description="Necessary for homooligomerization" evidence="6">
    <location>
        <begin position="209"/>
        <end position="336"/>
    </location>
</feature>
<feature type="region of interest" description="Interaction with DNA" evidence="6">
    <location>
        <begin position="213"/>
        <end position="215"/>
    </location>
</feature>
<feature type="region of interest" description="Interaction with DNA" evidence="6">
    <location>
        <begin position="313"/>
        <end position="320"/>
    </location>
</feature>
<feature type="active site" description="Proton donor" evidence="2">
    <location>
        <position position="259"/>
    </location>
</feature>
<feature type="binding site" evidence="2">
    <location>
        <position position="65"/>
    </location>
    <ligand>
        <name>Zn(2+)</name>
        <dbReference type="ChEBI" id="CHEBI:29105"/>
        <label>1</label>
    </ligand>
</feature>
<feature type="binding site" evidence="2">
    <location>
        <position position="97"/>
    </location>
    <ligand>
        <name>Zn(2+)</name>
        <dbReference type="ChEBI" id="CHEBI:29105"/>
        <label>1</label>
    </ligand>
</feature>
<feature type="binding site" evidence="2">
    <location>
        <position position="100"/>
    </location>
    <ligand>
        <name>Zn(2+)</name>
        <dbReference type="ChEBI" id="CHEBI:29105"/>
        <label>1</label>
    </ligand>
</feature>
<feature type="binding site" evidence="1">
    <location>
        <position position="257"/>
    </location>
    <ligand>
        <name>Zn(2+)</name>
        <dbReference type="ChEBI" id="CHEBI:29105"/>
        <label>2</label>
        <note>catalytic</note>
    </ligand>
</feature>
<feature type="binding site" evidence="1">
    <location>
        <position position="288"/>
    </location>
    <ligand>
        <name>Zn(2+)</name>
        <dbReference type="ChEBI" id="CHEBI:29105"/>
        <label>2</label>
        <note>catalytic</note>
    </ligand>
</feature>
<feature type="binding site" evidence="1">
    <location>
        <position position="291"/>
    </location>
    <ligand>
        <name>Zn(2+)</name>
        <dbReference type="ChEBI" id="CHEBI:29105"/>
        <label>2</label>
        <note>catalytic</note>
    </ligand>
</feature>
<feature type="site" description="Interaction with DNA" evidence="6">
    <location>
        <position position="244"/>
    </location>
</feature>
<feature type="modified residue" description="Phosphothreonine; by PKA" evidence="1">
    <location>
        <position position="32"/>
    </location>
</feature>
<feature type="modified residue" description="Phosphothreonine; by PKA and CAMK2" evidence="1">
    <location>
        <position position="218"/>
    </location>
</feature>
<feature type="sequence conflict" description="In Ref. 2; AAP85255." evidence="6" ref="2">
    <original>H</original>
    <variation>Q</variation>
    <location>
        <position position="4"/>
    </location>
</feature>
<feature type="sequence conflict" description="In Ref. 2; AAP85255." evidence="6" ref="2">
    <original>G</original>
    <variation>E</variation>
    <location>
        <position position="373"/>
    </location>
</feature>
<feature type="sequence conflict" description="In Ref. 2; AAP85255." evidence="6" ref="2">
    <original>R</original>
    <variation>Q</variation>
    <location>
        <position position="376"/>
    </location>
</feature>
<organism>
    <name type="scientific">Pan troglodytes</name>
    <name type="common">Chimpanzee</name>
    <dbReference type="NCBI Taxonomy" id="9598"/>
    <lineage>
        <taxon>Eukaryota</taxon>
        <taxon>Metazoa</taxon>
        <taxon>Chordata</taxon>
        <taxon>Craniata</taxon>
        <taxon>Vertebrata</taxon>
        <taxon>Euteleostomi</taxon>
        <taxon>Mammalia</taxon>
        <taxon>Eutheria</taxon>
        <taxon>Euarchontoglires</taxon>
        <taxon>Primates</taxon>
        <taxon>Haplorrhini</taxon>
        <taxon>Catarrhini</taxon>
        <taxon>Hominidae</taxon>
        <taxon>Pan</taxon>
    </lineage>
</organism>